<evidence type="ECO:0000250" key="1"/>
<evidence type="ECO:0000250" key="2">
    <source>
        <dbReference type="UniProtKB" id="P35639"/>
    </source>
</evidence>
<evidence type="ECO:0000255" key="3">
    <source>
        <dbReference type="PROSITE-ProRule" id="PRU00978"/>
    </source>
</evidence>
<evidence type="ECO:0000256" key="4">
    <source>
        <dbReference type="SAM" id="MobiDB-lite"/>
    </source>
</evidence>
<evidence type="ECO:0000305" key="5"/>
<organism>
    <name type="scientific">Cricetulus griseus</name>
    <name type="common">Chinese hamster</name>
    <name type="synonym">Cricetulus barabensis griseus</name>
    <dbReference type="NCBI Taxonomy" id="10029"/>
    <lineage>
        <taxon>Eukaryota</taxon>
        <taxon>Metazoa</taxon>
        <taxon>Chordata</taxon>
        <taxon>Craniata</taxon>
        <taxon>Vertebrata</taxon>
        <taxon>Euteleostomi</taxon>
        <taxon>Mammalia</taxon>
        <taxon>Eutheria</taxon>
        <taxon>Euarchontoglires</taxon>
        <taxon>Glires</taxon>
        <taxon>Rodentia</taxon>
        <taxon>Myomorpha</taxon>
        <taxon>Muroidea</taxon>
        <taxon>Cricetidae</taxon>
        <taxon>Cricetinae</taxon>
        <taxon>Cricetulus</taxon>
    </lineage>
</organism>
<dbReference type="EMBL" id="M29238">
    <property type="protein sequence ID" value="AAA36982.1"/>
    <property type="molecule type" value="mRNA"/>
</dbReference>
<dbReference type="SMR" id="P14607"/>
<dbReference type="eggNOG" id="KOG3119">
    <property type="taxonomic scope" value="Eukaryota"/>
</dbReference>
<dbReference type="Proteomes" id="UP000694386">
    <property type="component" value="Unplaced"/>
</dbReference>
<dbReference type="Proteomes" id="UP001108280">
    <property type="component" value="Unplaced"/>
</dbReference>
<dbReference type="GO" id="GO:1990622">
    <property type="term" value="C:CHOP-ATF3 complex"/>
    <property type="evidence" value="ECO:0007669"/>
    <property type="project" value="TreeGrafter"/>
</dbReference>
<dbReference type="GO" id="GO:1990617">
    <property type="term" value="C:CHOP-ATF4 complex"/>
    <property type="evidence" value="ECO:0007669"/>
    <property type="project" value="TreeGrafter"/>
</dbReference>
<dbReference type="GO" id="GO:0036488">
    <property type="term" value="C:CHOP-C/EBP complex"/>
    <property type="evidence" value="ECO:0007669"/>
    <property type="project" value="TreeGrafter"/>
</dbReference>
<dbReference type="GO" id="GO:0005737">
    <property type="term" value="C:cytoplasm"/>
    <property type="evidence" value="ECO:0007669"/>
    <property type="project" value="UniProtKB-SubCell"/>
</dbReference>
<dbReference type="GO" id="GO:0005654">
    <property type="term" value="C:nucleoplasm"/>
    <property type="evidence" value="ECO:0000304"/>
    <property type="project" value="Reactome"/>
</dbReference>
<dbReference type="GO" id="GO:0005634">
    <property type="term" value="C:nucleus"/>
    <property type="evidence" value="ECO:0000250"/>
    <property type="project" value="UniProtKB"/>
</dbReference>
<dbReference type="GO" id="GO:0008140">
    <property type="term" value="F:cAMP response element binding protein binding"/>
    <property type="evidence" value="ECO:0000250"/>
    <property type="project" value="UniProtKB"/>
</dbReference>
<dbReference type="GO" id="GO:0003677">
    <property type="term" value="F:DNA binding"/>
    <property type="evidence" value="ECO:0000250"/>
    <property type="project" value="UniProtKB"/>
</dbReference>
<dbReference type="GO" id="GO:0001228">
    <property type="term" value="F:DNA-binding transcription activator activity, RNA polymerase II-specific"/>
    <property type="evidence" value="ECO:0007669"/>
    <property type="project" value="TreeGrafter"/>
</dbReference>
<dbReference type="GO" id="GO:0003700">
    <property type="term" value="F:DNA-binding transcription factor activity"/>
    <property type="evidence" value="ECO:0000250"/>
    <property type="project" value="UniProtKB"/>
</dbReference>
<dbReference type="GO" id="GO:0046982">
    <property type="term" value="F:protein heterodimerization activity"/>
    <property type="evidence" value="ECO:0000250"/>
    <property type="project" value="UniProtKB"/>
</dbReference>
<dbReference type="GO" id="GO:0000978">
    <property type="term" value="F:RNA polymerase II cis-regulatory region sequence-specific DNA binding"/>
    <property type="evidence" value="ECO:0007669"/>
    <property type="project" value="TreeGrafter"/>
</dbReference>
<dbReference type="GO" id="GO:0006915">
    <property type="term" value="P:apoptotic process"/>
    <property type="evidence" value="ECO:0000250"/>
    <property type="project" value="UniProtKB"/>
</dbReference>
<dbReference type="GO" id="GO:0001955">
    <property type="term" value="P:blood vessel maturation"/>
    <property type="evidence" value="ECO:0000250"/>
    <property type="project" value="UniProtKB"/>
</dbReference>
<dbReference type="GO" id="GO:0030968">
    <property type="term" value="P:endoplasmic reticulum unfolded protein response"/>
    <property type="evidence" value="ECO:0000250"/>
    <property type="project" value="UniProtKB"/>
</dbReference>
<dbReference type="GO" id="GO:0006983">
    <property type="term" value="P:ER overload response"/>
    <property type="evidence" value="ECO:0007669"/>
    <property type="project" value="TreeGrafter"/>
</dbReference>
<dbReference type="GO" id="GO:0070059">
    <property type="term" value="P:intrinsic apoptotic signaling pathway in response to endoplasmic reticulum stress"/>
    <property type="evidence" value="ECO:0000250"/>
    <property type="project" value="UniProtKB"/>
</dbReference>
<dbReference type="GO" id="GO:0045892">
    <property type="term" value="P:negative regulation of DNA-templated transcription"/>
    <property type="evidence" value="ECO:0000250"/>
    <property type="project" value="UniProtKB"/>
</dbReference>
<dbReference type="GO" id="GO:0045662">
    <property type="term" value="P:negative regulation of myoblast differentiation"/>
    <property type="evidence" value="ECO:0000250"/>
    <property type="project" value="UniProtKB"/>
</dbReference>
<dbReference type="GO" id="GO:0000122">
    <property type="term" value="P:negative regulation of transcription by RNA polymerase II"/>
    <property type="evidence" value="ECO:0007669"/>
    <property type="project" value="TreeGrafter"/>
</dbReference>
<dbReference type="GO" id="GO:0045893">
    <property type="term" value="P:positive regulation of DNA-templated transcription"/>
    <property type="evidence" value="ECO:0000250"/>
    <property type="project" value="UniProtKB"/>
</dbReference>
<dbReference type="GO" id="GO:0032757">
    <property type="term" value="P:positive regulation of interleukin-8 production"/>
    <property type="evidence" value="ECO:0000250"/>
    <property type="project" value="UniProtKB"/>
</dbReference>
<dbReference type="GO" id="GO:2001244">
    <property type="term" value="P:positive regulation of intrinsic apoptotic signaling pathway"/>
    <property type="evidence" value="ECO:0000250"/>
    <property type="project" value="UniProtKB"/>
</dbReference>
<dbReference type="GO" id="GO:0043525">
    <property type="term" value="P:positive regulation of neuron apoptotic process"/>
    <property type="evidence" value="ECO:0000250"/>
    <property type="project" value="UniProtKB"/>
</dbReference>
<dbReference type="GO" id="GO:0043161">
    <property type="term" value="P:proteasome-mediated ubiquitin-dependent protein catabolic process"/>
    <property type="evidence" value="ECO:0000250"/>
    <property type="project" value="UniProtKB"/>
</dbReference>
<dbReference type="GO" id="GO:0010506">
    <property type="term" value="P:regulation of autophagy"/>
    <property type="evidence" value="ECO:0000250"/>
    <property type="project" value="UniProtKB"/>
</dbReference>
<dbReference type="GO" id="GO:0051726">
    <property type="term" value="P:regulation of cell cycle"/>
    <property type="evidence" value="ECO:0007669"/>
    <property type="project" value="UniProtKB-KW"/>
</dbReference>
<dbReference type="GO" id="GO:0006355">
    <property type="term" value="P:regulation of DNA-templated transcription"/>
    <property type="evidence" value="ECO:0000250"/>
    <property type="project" value="UniProtKB"/>
</dbReference>
<dbReference type="GO" id="GO:0051209">
    <property type="term" value="P:release of sequestered calcium ion into cytosol"/>
    <property type="evidence" value="ECO:0000250"/>
    <property type="project" value="UniProtKB"/>
</dbReference>
<dbReference type="GO" id="GO:0034976">
    <property type="term" value="P:response to endoplasmic reticulum stress"/>
    <property type="evidence" value="ECO:0000250"/>
    <property type="project" value="UniProtKB"/>
</dbReference>
<dbReference type="GO" id="GO:0042594">
    <property type="term" value="P:response to starvation"/>
    <property type="evidence" value="ECO:0000250"/>
    <property type="project" value="UniProtKB"/>
</dbReference>
<dbReference type="GO" id="GO:0006986">
    <property type="term" value="P:response to unfolded protein"/>
    <property type="evidence" value="ECO:0000250"/>
    <property type="project" value="UniProtKB"/>
</dbReference>
<dbReference type="GO" id="GO:0016055">
    <property type="term" value="P:Wnt signaling pathway"/>
    <property type="evidence" value="ECO:0007669"/>
    <property type="project" value="UniProtKB-KW"/>
</dbReference>
<dbReference type="FunFam" id="1.20.5.170:FF:000066">
    <property type="entry name" value="DNA damage-inducible transcript 3 protein"/>
    <property type="match status" value="1"/>
</dbReference>
<dbReference type="Gene3D" id="1.20.5.170">
    <property type="match status" value="1"/>
</dbReference>
<dbReference type="InterPro" id="IPR004827">
    <property type="entry name" value="bZIP"/>
</dbReference>
<dbReference type="InterPro" id="IPR016670">
    <property type="entry name" value="DNA_damage_induc_transcript_3"/>
</dbReference>
<dbReference type="PANTHER" id="PTHR16833">
    <property type="entry name" value="DNA DAMAGE-INDUCIBLE TRANSCRIPT 3 DDIT3"/>
    <property type="match status" value="1"/>
</dbReference>
<dbReference type="PANTHER" id="PTHR16833:SF0">
    <property type="entry name" value="DNA DAMAGE-INDUCIBLE TRANSCRIPT 3 PROTEIN"/>
    <property type="match status" value="1"/>
</dbReference>
<dbReference type="PIRSF" id="PIRSF016571">
    <property type="entry name" value="C/EBPzeta_CHOP_DDIT3"/>
    <property type="match status" value="1"/>
</dbReference>
<dbReference type="SMART" id="SM00338">
    <property type="entry name" value="BRLZ"/>
    <property type="match status" value="1"/>
</dbReference>
<dbReference type="PROSITE" id="PS50217">
    <property type="entry name" value="BZIP"/>
    <property type="match status" value="1"/>
</dbReference>
<gene>
    <name type="primary">DDIT3</name>
    <name type="synonym">CHOP</name>
    <name type="synonym">CHOP10</name>
    <name type="synonym">GADD153</name>
</gene>
<comment type="function">
    <text evidence="1">Multifunctional transcription factor in ER stress response. Plays an essential role in the response to a wide variety of cell stresses and induces cell cycle arrest and apoptosis in response to ER stress. Plays a dual role both as an inhibitor of CCAAT/enhancer-binding protein (C/EBP) function and as an activator of other genes. Acts as a dominant-negative regulator of C/EBP-induced transcription: dimerizes with members of the C/EBP family, impairs their association with C/EBP binding sites in the promoter regions, and inhibits the expression of C/EBP regulated genes. Positively regulates the transcription of TRIB3, IL6, IL8, IL23, TNFRSF10B/DR5, PPP1R15A/GADD34, BBC3/PUMA, BCL2L11/BIM and ERO1L. Negatively regulates; expression of BCL2 and MYOD1, ATF4-dependent transcriptional activation of asparagine synthetase (ASNS), CEBPA-dependent transcriptional activation of hepcidin (HAMP) and CEBPB-mediated expression of peroxisome proliferator-activated receptor gamma (PPARG). Inhibits the canonical Wnt signaling pathway by binding to TCF7L2/TCF4, impairing its DNA-binding properties and repressing its transcriptional activity. Plays a regulatory role in the inflammatory response through the induction of caspase-11 (CASP4/CASP11) which induces the activation of caspase-1 (CASP1) and both these caspases increase the activation of pro-IL1B to mature IL1B which is involved in the inflammatory response (By similarity).</text>
</comment>
<comment type="subunit">
    <text evidence="1">Heterodimer (By similarity). Interacts with TCF7L2/TCF4, EP300/P300, HDAC1, HDAC5 and HDAC6. Interacts with TRIB3 which blocks its association with EP300/P300. Interacts with FOXO3, CEBPB and ATF4 (By similarity).</text>
</comment>
<comment type="subcellular location">
    <subcellularLocation>
        <location evidence="1">Cytoplasm</location>
    </subcellularLocation>
    <subcellularLocation>
        <location evidence="3">Nucleus</location>
    </subcellularLocation>
    <text evidence="1">Present in the cytoplasm under non-stressed conditions and ER stress leads to its nuclear accumulation.</text>
</comment>
<comment type="domain">
    <text evidence="1">The N-terminal region is necessary for its proteasomal degradation, transcriptional activity and interaction with EP300/P300.</text>
</comment>
<comment type="PTM">
    <text evidence="1">Ubiquitinated, leading to its degradation by the proteasome.</text>
</comment>
<comment type="PTM">
    <text evidence="1">Phosphorylation at serine residues by MAPK14 enhances its transcriptional activation activity while phosphorylation at serine residues by CK2 inhibits its transcriptional activation activity.</text>
</comment>
<comment type="similarity">
    <text evidence="5">Belongs to the bZIP family.</text>
</comment>
<name>DDIT3_CRIGR</name>
<protein>
    <recommendedName>
        <fullName>DNA damage-inducible transcript 3 protein</fullName>
        <shortName>DDIT-3</shortName>
    </recommendedName>
    <alternativeName>
        <fullName>C/EBP zeta</fullName>
    </alternativeName>
    <alternativeName>
        <fullName>C/EBP-homologous protein</fullName>
        <shortName>CHOP</shortName>
    </alternativeName>
    <alternativeName>
        <fullName>C/EBP-homologous protein 10</fullName>
        <shortName>CHOP-10</shortName>
    </alternativeName>
    <alternativeName>
        <fullName>CCAAT/enhancer-binding protein homologous protein</fullName>
    </alternativeName>
    <alternativeName>
        <fullName>Growth arrest and DNA-damage-inducible protein GADD153</fullName>
    </alternativeName>
</protein>
<sequence length="168" mass="18831">MAAESLPFTLETVSSWELEAWYEDLQEVLSSDENGGPYSSSLGNEEGESKTFTTLDPASLAWLTEEPGPAEVTSSSQSPRSPDSSQSCMAQEEEEDQGRTRKRKQSGQCPARGTGKQRMKEKEQENERKVAQLAEENERLKQEIERLTREVEATRPGSDRPHVNLQQV</sequence>
<accession>P14607</accession>
<feature type="chain" id="PRO_0000076641" description="DNA damage-inducible transcript 3 protein">
    <location>
        <begin position="1"/>
        <end position="168"/>
    </location>
</feature>
<feature type="domain" description="bZIP" evidence="3">
    <location>
        <begin position="98"/>
        <end position="161"/>
    </location>
</feature>
<feature type="region of interest" description="N-terminal" evidence="1">
    <location>
        <begin position="10"/>
        <end position="26"/>
    </location>
</feature>
<feature type="region of interest" description="Interaction with TRIB3" evidence="1">
    <location>
        <begin position="10"/>
        <end position="18"/>
    </location>
</feature>
<feature type="region of interest" description="Disordered" evidence="4">
    <location>
        <begin position="30"/>
        <end position="168"/>
    </location>
</feature>
<feature type="region of interest" description="Basic motif" evidence="3">
    <location>
        <begin position="101"/>
        <end position="129"/>
    </location>
</feature>
<feature type="region of interest" description="Leucine-zipper" evidence="3">
    <location>
        <begin position="133"/>
        <end position="147"/>
    </location>
</feature>
<feature type="compositionally biased region" description="Polar residues" evidence="4">
    <location>
        <begin position="30"/>
        <end position="43"/>
    </location>
</feature>
<feature type="compositionally biased region" description="Low complexity" evidence="4">
    <location>
        <begin position="74"/>
        <end position="87"/>
    </location>
</feature>
<feature type="compositionally biased region" description="Basic and acidic residues" evidence="4">
    <location>
        <begin position="118"/>
        <end position="162"/>
    </location>
</feature>
<feature type="modified residue" description="Phosphoserine; by CK2" evidence="2">
    <location>
        <position position="14"/>
    </location>
</feature>
<feature type="modified residue" description="Phosphoserine; by CK2" evidence="2">
    <location>
        <position position="15"/>
    </location>
</feature>
<feature type="modified residue" description="Phosphoserine; by CK2" evidence="2">
    <location>
        <position position="30"/>
    </location>
</feature>
<feature type="modified residue" description="Phosphoserine; by CK2" evidence="2">
    <location>
        <position position="31"/>
    </location>
</feature>
<feature type="modified residue" description="Phosphoserine; by MAPK14" evidence="2">
    <location>
        <position position="78"/>
    </location>
</feature>
<feature type="modified residue" description="Phosphoserine; by MAPK14" evidence="2">
    <location>
        <position position="81"/>
    </location>
</feature>
<keyword id="KW-0010">Activator</keyword>
<keyword id="KW-0053">Apoptosis</keyword>
<keyword id="KW-0131">Cell cycle</keyword>
<keyword id="KW-0963">Cytoplasm</keyword>
<keyword id="KW-0238">DNA-binding</keyword>
<keyword id="KW-0338">Growth arrest</keyword>
<keyword id="KW-0539">Nucleus</keyword>
<keyword id="KW-0597">Phosphoprotein</keyword>
<keyword id="KW-0678">Repressor</keyword>
<keyword id="KW-0346">Stress response</keyword>
<keyword id="KW-0804">Transcription</keyword>
<keyword id="KW-0805">Transcription regulation</keyword>
<keyword id="KW-0832">Ubl conjugation</keyword>
<keyword id="KW-0834">Unfolded protein response</keyword>
<keyword id="KW-0879">Wnt signaling pathway</keyword>
<reference key="1">
    <citation type="journal article" date="1989" name="Mol. Cell. Biol.">
        <title>Mammalian genes coordinately regulated by growth arrest signals and DNA-damaging agents.</title>
        <authorList>
            <person name="Fornace A.J. Jr."/>
            <person name="Nebert D.W."/>
            <person name="Hollander M.C."/>
            <person name="Luethy J.D."/>
            <person name="Papathanasiou M."/>
            <person name="Fargnoli J."/>
            <person name="Holbrook N.J."/>
        </authorList>
    </citation>
    <scope>NUCLEOTIDE SEQUENCE [MRNA]</scope>
    <source>
        <tissue>Ovary</tissue>
    </source>
</reference>
<proteinExistence type="evidence at transcript level"/>